<name>EIF3A_ASPNC</name>
<dbReference type="EMBL" id="AM269962">
    <property type="protein sequence ID" value="CAK36978.1"/>
    <property type="molecule type" value="Genomic_DNA"/>
</dbReference>
<dbReference type="RefSeq" id="XP_001388870.1">
    <property type="nucleotide sequence ID" value="XM_001388833.2"/>
</dbReference>
<dbReference type="SMR" id="A2Q8I1"/>
<dbReference type="EnsemblFungi" id="CAK36978">
    <property type="protein sequence ID" value="CAK36978"/>
    <property type="gene ID" value="An01g04430"/>
</dbReference>
<dbReference type="GeneID" id="4977231"/>
<dbReference type="KEGG" id="ang:An01g04430"/>
<dbReference type="VEuPathDB" id="FungiDB:An01g04430"/>
<dbReference type="HOGENOM" id="CLU_002096_2_1_1"/>
<dbReference type="Proteomes" id="UP000006706">
    <property type="component" value="Chromosome 2R"/>
</dbReference>
<dbReference type="GO" id="GO:0010494">
    <property type="term" value="C:cytoplasmic stress granule"/>
    <property type="evidence" value="ECO:0007669"/>
    <property type="project" value="EnsemblFungi"/>
</dbReference>
<dbReference type="GO" id="GO:0016282">
    <property type="term" value="C:eukaryotic 43S preinitiation complex"/>
    <property type="evidence" value="ECO:0007669"/>
    <property type="project" value="UniProtKB-UniRule"/>
</dbReference>
<dbReference type="GO" id="GO:0033290">
    <property type="term" value="C:eukaryotic 48S preinitiation complex"/>
    <property type="evidence" value="ECO:0007669"/>
    <property type="project" value="UniProtKB-UniRule"/>
</dbReference>
<dbReference type="GO" id="GO:0071540">
    <property type="term" value="C:eukaryotic translation initiation factor 3 complex, eIF3e"/>
    <property type="evidence" value="ECO:0007669"/>
    <property type="project" value="EnsemblFungi"/>
</dbReference>
<dbReference type="GO" id="GO:0071541">
    <property type="term" value="C:eukaryotic translation initiation factor 3 complex, eIF3m"/>
    <property type="evidence" value="ECO:0007669"/>
    <property type="project" value="EnsemblFungi"/>
</dbReference>
<dbReference type="GO" id="GO:0043614">
    <property type="term" value="C:multi-eIF complex"/>
    <property type="evidence" value="ECO:0007669"/>
    <property type="project" value="TreeGrafter"/>
</dbReference>
<dbReference type="GO" id="GO:0003729">
    <property type="term" value="F:mRNA binding"/>
    <property type="evidence" value="ECO:0007669"/>
    <property type="project" value="TreeGrafter"/>
</dbReference>
<dbReference type="GO" id="GO:0003743">
    <property type="term" value="F:translation initiation factor activity"/>
    <property type="evidence" value="ECO:0007669"/>
    <property type="project" value="UniProtKB-UniRule"/>
</dbReference>
<dbReference type="GO" id="GO:0001732">
    <property type="term" value="P:formation of cytoplasmic translation initiation complex"/>
    <property type="evidence" value="ECO:0007669"/>
    <property type="project" value="UniProtKB-UniRule"/>
</dbReference>
<dbReference type="GO" id="GO:0002188">
    <property type="term" value="P:translation reinitiation"/>
    <property type="evidence" value="ECO:0007669"/>
    <property type="project" value="TreeGrafter"/>
</dbReference>
<dbReference type="FunFam" id="1.25.40.860:FF:000003">
    <property type="entry name" value="Eukaryotic translation initiation factor 3 subunit A"/>
    <property type="match status" value="1"/>
</dbReference>
<dbReference type="FunFam" id="1.25.40.860:FF:000005">
    <property type="entry name" value="Eukaryotic translation initiation factor 3 subunit A"/>
    <property type="match status" value="1"/>
</dbReference>
<dbReference type="FunFam" id="4.10.860.10:FF:000001">
    <property type="entry name" value="Eukaryotic translation initiation factor 3 subunit A"/>
    <property type="match status" value="1"/>
</dbReference>
<dbReference type="Gene3D" id="1.25.40.860">
    <property type="match status" value="2"/>
</dbReference>
<dbReference type="Gene3D" id="4.10.860.10">
    <property type="entry name" value="UVR domain"/>
    <property type="match status" value="1"/>
</dbReference>
<dbReference type="HAMAP" id="MF_03000">
    <property type="entry name" value="eIF3a"/>
    <property type="match status" value="1"/>
</dbReference>
<dbReference type="InterPro" id="IPR027512">
    <property type="entry name" value="EIF3A"/>
</dbReference>
<dbReference type="InterPro" id="IPR054711">
    <property type="entry name" value="eIF3a_PCI_TPR-like"/>
</dbReference>
<dbReference type="InterPro" id="IPR000717">
    <property type="entry name" value="PCI_dom"/>
</dbReference>
<dbReference type="PANTHER" id="PTHR14005:SF0">
    <property type="entry name" value="EUKARYOTIC TRANSLATION INITIATION FACTOR 3 SUBUNIT A"/>
    <property type="match status" value="1"/>
</dbReference>
<dbReference type="PANTHER" id="PTHR14005">
    <property type="entry name" value="EUKARYOTIC TRANSLATION INITIATION FACTOR 3, THETA SUBUNIT"/>
    <property type="match status" value="1"/>
</dbReference>
<dbReference type="Pfam" id="PF22591">
    <property type="entry name" value="eIF3a_PCI_TPR-like"/>
    <property type="match status" value="1"/>
</dbReference>
<dbReference type="Pfam" id="PF01399">
    <property type="entry name" value="PCI"/>
    <property type="match status" value="1"/>
</dbReference>
<dbReference type="SMART" id="SM00088">
    <property type="entry name" value="PINT"/>
    <property type="match status" value="1"/>
</dbReference>
<dbReference type="PROSITE" id="PS50250">
    <property type="entry name" value="PCI"/>
    <property type="match status" value="1"/>
</dbReference>
<sequence length="1052" mass="119864">MPPPPHIKPENVLKRAQELIAVGQAPAALNVLHEHVTSKRTRSSPIASLEPVMLLFVELCVDLRKGKAAKDGLYQYKNIAQNTNVGTIEVVLKKFIELAEKKVTEAQAKADEIQSSLESAAPSSNVDDLEAIETPETILLATVSGEQSRDRTDRAVVTPWLKFLWETYRTVLEILKNNARLEVMYQTTALQAFQFCLKYTRKTEFRRLCELLRNHVQNAAKYSAQMHAINLSDPDTLQRHLDTRFQQLNVAVELELWQEAFRSIEDIHTLLSLSKRPAKNVMMANYYEKLARIFLVSENYLFHAAAFSRYYNLLRQSAAALAAGQGTKKENPSVTEADMTKAASFVLLSALSIPVISTSRSRGALVDVDEVRKNKNTRLTNLLGMASPPTRAVLFKDALNKGLLKRARPEIRDLYNILEVDFHPLSICKKITPILKQIGADPEMEKYVLPLQQVILTRLFQQLSQVYESVELKFVYELAQFPDPFQITPSMIEKFIMNGCKKGDLAIRVDHISGVLTFDTDVFSSAKALHPGSAAGSAESEVGSVQRLQNTPAEIARLQLTRLAKTLHVTCMYVDPSYNEARLQAKRAALARAEAGAAKEHEETLARRVIIEKKKEAATDALQRKQREEETRKRIRTQQLQEAEKQRLLDEHREREKKRIKDEQDRIRQQELKKQLEELKTGVKGIDISELDLNELDANRLRAMKLAQLEKEKNELNDRIRTTAKRIDHLERAFRREELKHVPEDYEKQKQRDMEIYEATKAEALKEAEDKHKEAVALKHRLSRLVPQFNSFRKEVSEKRHEEFEKRRKAAERDFEAKKMQRIKEVQERRRRERAEREEEERRRKEEEERIRREEEERTAKEEERRRVLAEEKAKREEERKRLDELAAKQKQREEEAEARRAARRTGGAEPEAAPERAAPTERTAPRLNLAPRTGGAGPSWRERQAAKEAAGGTPAAPAAAAPEPAREEPAPVRRTGGYVPPHLRSGASATPAAPAPAPSTERYVPRAMREAGSSQPPSRTQTPGSSSDKPEESKPAAGKWVPRWKQQQGGQ</sequence>
<comment type="function">
    <text evidence="1">RNA-binding component of the eukaryotic translation initiation factor 3 (eIF-3) complex, which is involved in protein synthesis of a specialized repertoire of mRNAs and, together with other initiation factors, stimulates binding of mRNA and methionyl-tRNAi to the 40S ribosome. The eIF-3 complex specifically targets and initiates translation of a subset of mRNAs involved in cell proliferation.</text>
</comment>
<comment type="subunit">
    <text evidence="1">Component of the eukaryotic translation initiation factor 3 (eIF-3) complex.</text>
</comment>
<comment type="subcellular location">
    <subcellularLocation>
        <location evidence="1">Cytoplasm</location>
    </subcellularLocation>
</comment>
<comment type="similarity">
    <text evidence="1">Belongs to the eIF-3 subunit A family.</text>
</comment>
<organism>
    <name type="scientific">Aspergillus niger (strain ATCC MYA-4892 / CBS 513.88 / FGSC A1513)</name>
    <dbReference type="NCBI Taxonomy" id="425011"/>
    <lineage>
        <taxon>Eukaryota</taxon>
        <taxon>Fungi</taxon>
        <taxon>Dikarya</taxon>
        <taxon>Ascomycota</taxon>
        <taxon>Pezizomycotina</taxon>
        <taxon>Eurotiomycetes</taxon>
        <taxon>Eurotiomycetidae</taxon>
        <taxon>Eurotiales</taxon>
        <taxon>Aspergillaceae</taxon>
        <taxon>Aspergillus</taxon>
        <taxon>Aspergillus subgen. Circumdati</taxon>
    </lineage>
</organism>
<gene>
    <name type="primary">tif32</name>
    <name type="ORF">An01g04430</name>
</gene>
<keyword id="KW-0175">Coiled coil</keyword>
<keyword id="KW-0963">Cytoplasm</keyword>
<keyword id="KW-0396">Initiation factor</keyword>
<keyword id="KW-0648">Protein biosynthesis</keyword>
<keyword id="KW-1185">Reference proteome</keyword>
<keyword id="KW-0694">RNA-binding</keyword>
<evidence type="ECO:0000255" key="1">
    <source>
        <dbReference type="HAMAP-Rule" id="MF_03000"/>
    </source>
</evidence>
<evidence type="ECO:0000255" key="2">
    <source>
        <dbReference type="PROSITE-ProRule" id="PRU01185"/>
    </source>
</evidence>
<evidence type="ECO:0000256" key="3">
    <source>
        <dbReference type="SAM" id="MobiDB-lite"/>
    </source>
</evidence>
<proteinExistence type="inferred from homology"/>
<protein>
    <recommendedName>
        <fullName evidence="1">Eukaryotic translation initiation factor 3 subunit A</fullName>
        <shortName evidence="1">eIF3a</shortName>
    </recommendedName>
    <alternativeName>
        <fullName evidence="1">Eukaryotic translation initiation factor 3 110 kDa subunit homolog</fullName>
        <shortName evidence="1">eIF3 p110</shortName>
    </alternativeName>
    <alternativeName>
        <fullName evidence="1">Translation initiation factor eIF3, p110 subunit homolog</fullName>
    </alternativeName>
</protein>
<reference key="1">
    <citation type="journal article" date="2007" name="Nat. Biotechnol.">
        <title>Genome sequencing and analysis of the versatile cell factory Aspergillus niger CBS 513.88.</title>
        <authorList>
            <person name="Pel H.J."/>
            <person name="de Winde J.H."/>
            <person name="Archer D.B."/>
            <person name="Dyer P.S."/>
            <person name="Hofmann G."/>
            <person name="Schaap P.J."/>
            <person name="Turner G."/>
            <person name="de Vries R.P."/>
            <person name="Albang R."/>
            <person name="Albermann K."/>
            <person name="Andersen M.R."/>
            <person name="Bendtsen J.D."/>
            <person name="Benen J.A.E."/>
            <person name="van den Berg M."/>
            <person name="Breestraat S."/>
            <person name="Caddick M.X."/>
            <person name="Contreras R."/>
            <person name="Cornell M."/>
            <person name="Coutinho P.M."/>
            <person name="Danchin E.G.J."/>
            <person name="Debets A.J.M."/>
            <person name="Dekker P."/>
            <person name="van Dijck P.W.M."/>
            <person name="van Dijk A."/>
            <person name="Dijkhuizen L."/>
            <person name="Driessen A.J.M."/>
            <person name="d'Enfert C."/>
            <person name="Geysens S."/>
            <person name="Goosen C."/>
            <person name="Groot G.S.P."/>
            <person name="de Groot P.W.J."/>
            <person name="Guillemette T."/>
            <person name="Henrissat B."/>
            <person name="Herweijer M."/>
            <person name="van den Hombergh J.P.T.W."/>
            <person name="van den Hondel C.A.M.J.J."/>
            <person name="van der Heijden R.T.J.M."/>
            <person name="van der Kaaij R.M."/>
            <person name="Klis F.M."/>
            <person name="Kools H.J."/>
            <person name="Kubicek C.P."/>
            <person name="van Kuyk P.A."/>
            <person name="Lauber J."/>
            <person name="Lu X."/>
            <person name="van der Maarel M.J.E.C."/>
            <person name="Meulenberg R."/>
            <person name="Menke H."/>
            <person name="Mortimer M.A."/>
            <person name="Nielsen J."/>
            <person name="Oliver S.G."/>
            <person name="Olsthoorn M."/>
            <person name="Pal K."/>
            <person name="van Peij N.N.M.E."/>
            <person name="Ram A.F.J."/>
            <person name="Rinas U."/>
            <person name="Roubos J.A."/>
            <person name="Sagt C.M.J."/>
            <person name="Schmoll M."/>
            <person name="Sun J."/>
            <person name="Ussery D."/>
            <person name="Varga J."/>
            <person name="Vervecken W."/>
            <person name="van de Vondervoort P.J.J."/>
            <person name="Wedler H."/>
            <person name="Woesten H.A.B."/>
            <person name="Zeng A.-P."/>
            <person name="van Ooyen A.J.J."/>
            <person name="Visser J."/>
            <person name="Stam H."/>
        </authorList>
    </citation>
    <scope>NUCLEOTIDE SEQUENCE [LARGE SCALE GENOMIC DNA]</scope>
    <source>
        <strain>ATCC MYA-4892 / CBS 513.88 / FGSC A1513</strain>
    </source>
</reference>
<accession>A2Q8I1</accession>
<feature type="chain" id="PRO_0000366353" description="Eukaryotic translation initiation factor 3 subunit A">
    <location>
        <begin position="1"/>
        <end position="1052"/>
    </location>
</feature>
<feature type="domain" description="PCI" evidence="2">
    <location>
        <begin position="339"/>
        <end position="523"/>
    </location>
</feature>
<feature type="region of interest" description="Disordered" evidence="3">
    <location>
        <begin position="617"/>
        <end position="646"/>
    </location>
</feature>
<feature type="region of interest" description="Disordered" evidence="3">
    <location>
        <begin position="794"/>
        <end position="1052"/>
    </location>
</feature>
<feature type="coiled-coil region" evidence="1">
    <location>
        <begin position="92"/>
        <end position="121"/>
    </location>
</feature>
<feature type="coiled-coil region" evidence="1">
    <location>
        <begin position="580"/>
        <end position="906"/>
    </location>
</feature>
<feature type="compositionally biased region" description="Basic and acidic residues" evidence="3">
    <location>
        <begin position="617"/>
        <end position="632"/>
    </location>
</feature>
<feature type="compositionally biased region" description="Basic and acidic residues" evidence="3">
    <location>
        <begin position="794"/>
        <end position="901"/>
    </location>
</feature>
<feature type="compositionally biased region" description="Low complexity" evidence="3">
    <location>
        <begin position="905"/>
        <end position="927"/>
    </location>
</feature>
<feature type="compositionally biased region" description="Low complexity" evidence="3">
    <location>
        <begin position="948"/>
        <end position="964"/>
    </location>
</feature>
<feature type="compositionally biased region" description="Polar residues" evidence="3">
    <location>
        <begin position="1013"/>
        <end position="1028"/>
    </location>
</feature>